<sequence>MSQGKIIKVSGPLVLASGMQEANIQDICRVGDLGLIGEIIEMRRDQASIQVYEETSGLGPGEPVITTGSPLSVELGPGLISQMFDGIQRPLERFQTITASDFLVRGVQLPNLDREAKWDFVPGLSVGDAVEAGDVLGTVQETNLVEHRIMVPVGVSGRLANISAGSFTVEETVYEIEQADGSVFKGTLMQKWPVRRGRPFAQKLIPVEPLVTGQRVIDTFFPVTKGGAAAVPGPFGAGKTVVQHQVAKFANVDIVIYVGCGERGNEMTDVLNEFPELIDPTTGQSIMQRTVLIANTSNMPVAAREASIYTGITIAEYFRDMGYSVAIMADSTSRWAEALREMSGRLEEMPGDEGYPAYLGSRIAEYYERAGRVKTLGSTAREGSITAIGAVSPPGGDISEPVTQNTLRIVKVFWGLDAQLAQRRHFPAINWLSSYSLYLDEVGAYIDQHEKIAWAEKVTKAMNILQKESELQEIVRLVGLDSLSEKDRLTMNAAKMIREDYLQQNAFDDVDTYTSFKKQVALLSNILTFDAEANRALELGAYFREIMEGTVELRDRIARSKFIHEDQLGKIQALSQTIEETLHQILAQGGLDNERH</sequence>
<organism>
    <name type="scientific">Streptococcus sanguinis (strain SK36)</name>
    <dbReference type="NCBI Taxonomy" id="388919"/>
    <lineage>
        <taxon>Bacteria</taxon>
        <taxon>Bacillati</taxon>
        <taxon>Bacillota</taxon>
        <taxon>Bacilli</taxon>
        <taxon>Lactobacillales</taxon>
        <taxon>Streptococcaceae</taxon>
        <taxon>Streptococcus</taxon>
    </lineage>
</organism>
<accession>A3CK48</accession>
<dbReference type="EC" id="7.1.2.2" evidence="1"/>
<dbReference type="EMBL" id="CP000387">
    <property type="protein sequence ID" value="ABN43553.1"/>
    <property type="status" value="ALT_INIT"/>
    <property type="molecule type" value="Genomic_DNA"/>
</dbReference>
<dbReference type="RefSeq" id="WP_033179094.1">
    <property type="nucleotide sequence ID" value="NC_009009.1"/>
</dbReference>
<dbReference type="RefSeq" id="YP_001034103.1">
    <property type="nucleotide sequence ID" value="NC_009009.1"/>
</dbReference>
<dbReference type="SMR" id="A3CK48"/>
<dbReference type="STRING" id="388919.SSA_0091"/>
<dbReference type="KEGG" id="ssa:SSA_0091"/>
<dbReference type="PATRIC" id="fig|388919.9.peg.85"/>
<dbReference type="eggNOG" id="COG1155">
    <property type="taxonomic scope" value="Bacteria"/>
</dbReference>
<dbReference type="HOGENOM" id="CLU_008162_3_1_9"/>
<dbReference type="OrthoDB" id="9803053at2"/>
<dbReference type="Proteomes" id="UP000002148">
    <property type="component" value="Chromosome"/>
</dbReference>
<dbReference type="GO" id="GO:0045259">
    <property type="term" value="C:proton-transporting ATP synthase complex"/>
    <property type="evidence" value="ECO:0007669"/>
    <property type="project" value="UniProtKB-ARBA"/>
</dbReference>
<dbReference type="GO" id="GO:0005524">
    <property type="term" value="F:ATP binding"/>
    <property type="evidence" value="ECO:0007669"/>
    <property type="project" value="UniProtKB-UniRule"/>
</dbReference>
<dbReference type="GO" id="GO:0046933">
    <property type="term" value="F:proton-transporting ATP synthase activity, rotational mechanism"/>
    <property type="evidence" value="ECO:0007669"/>
    <property type="project" value="UniProtKB-UniRule"/>
</dbReference>
<dbReference type="GO" id="GO:0046961">
    <property type="term" value="F:proton-transporting ATPase activity, rotational mechanism"/>
    <property type="evidence" value="ECO:0007669"/>
    <property type="project" value="InterPro"/>
</dbReference>
<dbReference type="GO" id="GO:0042777">
    <property type="term" value="P:proton motive force-driven plasma membrane ATP synthesis"/>
    <property type="evidence" value="ECO:0007669"/>
    <property type="project" value="UniProtKB-UniRule"/>
</dbReference>
<dbReference type="CDD" id="cd18111">
    <property type="entry name" value="ATP-synt_V_A-type_alpha_C"/>
    <property type="match status" value="1"/>
</dbReference>
<dbReference type="CDD" id="cd18119">
    <property type="entry name" value="ATP-synt_V_A-type_alpha_N"/>
    <property type="match status" value="1"/>
</dbReference>
<dbReference type="CDD" id="cd01134">
    <property type="entry name" value="V_A-ATPase_A"/>
    <property type="match status" value="1"/>
</dbReference>
<dbReference type="FunFam" id="3.40.50.300:FF:000675">
    <property type="entry name" value="V-type ATP synthase alpha chain"/>
    <property type="match status" value="1"/>
</dbReference>
<dbReference type="FunFam" id="2.40.30.20:FF:000002">
    <property type="entry name" value="V-type proton ATPase catalytic subunit A"/>
    <property type="match status" value="1"/>
</dbReference>
<dbReference type="FunFam" id="2.40.50.100:FF:000008">
    <property type="entry name" value="V-type proton ATPase catalytic subunit A"/>
    <property type="match status" value="1"/>
</dbReference>
<dbReference type="Gene3D" id="2.40.30.20">
    <property type="match status" value="1"/>
</dbReference>
<dbReference type="Gene3D" id="2.40.50.100">
    <property type="match status" value="1"/>
</dbReference>
<dbReference type="Gene3D" id="1.10.1140.10">
    <property type="entry name" value="Bovine Mitochondrial F1-atpase, Atp Synthase Beta Chain, Chain D, domain 3"/>
    <property type="match status" value="1"/>
</dbReference>
<dbReference type="Gene3D" id="3.40.50.300">
    <property type="entry name" value="P-loop containing nucleotide triphosphate hydrolases"/>
    <property type="match status" value="1"/>
</dbReference>
<dbReference type="HAMAP" id="MF_00309">
    <property type="entry name" value="ATP_synth_A_arch"/>
    <property type="match status" value="1"/>
</dbReference>
<dbReference type="InterPro" id="IPR055190">
    <property type="entry name" value="ATP-synt_VA_C"/>
</dbReference>
<dbReference type="InterPro" id="IPR031686">
    <property type="entry name" value="ATP-synth_a_Xtn"/>
</dbReference>
<dbReference type="InterPro" id="IPR023366">
    <property type="entry name" value="ATP_synth_asu-like_sf"/>
</dbReference>
<dbReference type="InterPro" id="IPR004100">
    <property type="entry name" value="ATPase_F1/V1/A1_a/bsu_N"/>
</dbReference>
<dbReference type="InterPro" id="IPR036121">
    <property type="entry name" value="ATPase_F1/V1/A1_a/bsu_N_sf"/>
</dbReference>
<dbReference type="InterPro" id="IPR000194">
    <property type="entry name" value="ATPase_F1/V1/A1_a/bsu_nucl-bd"/>
</dbReference>
<dbReference type="InterPro" id="IPR024034">
    <property type="entry name" value="ATPase_F1/V1_b/a_C"/>
</dbReference>
<dbReference type="InterPro" id="IPR027417">
    <property type="entry name" value="P-loop_NTPase"/>
</dbReference>
<dbReference type="InterPro" id="IPR022878">
    <property type="entry name" value="V-ATPase_asu"/>
</dbReference>
<dbReference type="NCBIfam" id="NF003220">
    <property type="entry name" value="PRK04192.1"/>
    <property type="match status" value="1"/>
</dbReference>
<dbReference type="PANTHER" id="PTHR43607:SF1">
    <property type="entry name" value="H(+)-TRANSPORTING TWO-SECTOR ATPASE"/>
    <property type="match status" value="1"/>
</dbReference>
<dbReference type="PANTHER" id="PTHR43607">
    <property type="entry name" value="V-TYPE PROTON ATPASE CATALYTIC SUBUNIT A"/>
    <property type="match status" value="1"/>
</dbReference>
<dbReference type="Pfam" id="PF00006">
    <property type="entry name" value="ATP-synt_ab"/>
    <property type="match status" value="1"/>
</dbReference>
<dbReference type="Pfam" id="PF02874">
    <property type="entry name" value="ATP-synt_ab_N"/>
    <property type="match status" value="1"/>
</dbReference>
<dbReference type="Pfam" id="PF16886">
    <property type="entry name" value="ATP-synt_ab_Xtn"/>
    <property type="match status" value="1"/>
</dbReference>
<dbReference type="Pfam" id="PF22919">
    <property type="entry name" value="ATP-synt_VA_C"/>
    <property type="match status" value="1"/>
</dbReference>
<dbReference type="SUPFAM" id="SSF47917">
    <property type="entry name" value="C-terminal domain of alpha and beta subunits of F1 ATP synthase"/>
    <property type="match status" value="1"/>
</dbReference>
<dbReference type="SUPFAM" id="SSF50615">
    <property type="entry name" value="N-terminal domain of alpha and beta subunits of F1 ATP synthase"/>
    <property type="match status" value="1"/>
</dbReference>
<dbReference type="SUPFAM" id="SSF52540">
    <property type="entry name" value="P-loop containing nucleoside triphosphate hydrolases"/>
    <property type="match status" value="1"/>
</dbReference>
<feature type="chain" id="PRO_0000322469" description="V-type ATP synthase alpha chain">
    <location>
        <begin position="1"/>
        <end position="596"/>
    </location>
</feature>
<feature type="binding site" evidence="1">
    <location>
        <begin position="233"/>
        <end position="240"/>
    </location>
    <ligand>
        <name>ATP</name>
        <dbReference type="ChEBI" id="CHEBI:30616"/>
    </ligand>
</feature>
<reference key="1">
    <citation type="journal article" date="2007" name="J. Bacteriol.">
        <title>Genome of the opportunistic pathogen Streptococcus sanguinis.</title>
        <authorList>
            <person name="Xu P."/>
            <person name="Alves J.M."/>
            <person name="Kitten T."/>
            <person name="Brown A."/>
            <person name="Chen Z."/>
            <person name="Ozaki L.S."/>
            <person name="Manque P."/>
            <person name="Ge X."/>
            <person name="Serrano M.G."/>
            <person name="Puiu D."/>
            <person name="Hendricks S."/>
            <person name="Wang Y."/>
            <person name="Chaplin M.D."/>
            <person name="Akan D."/>
            <person name="Paik S."/>
            <person name="Peterson D.L."/>
            <person name="Macrina F.L."/>
            <person name="Buck G.A."/>
        </authorList>
    </citation>
    <scope>NUCLEOTIDE SEQUENCE [LARGE SCALE GENOMIC DNA]</scope>
    <source>
        <strain>SK36</strain>
    </source>
</reference>
<proteinExistence type="inferred from homology"/>
<protein>
    <recommendedName>
        <fullName evidence="1">V-type ATP synthase alpha chain</fullName>
        <ecNumber evidence="1">7.1.2.2</ecNumber>
    </recommendedName>
    <alternativeName>
        <fullName evidence="1">V-ATPase subunit A</fullName>
    </alternativeName>
</protein>
<keyword id="KW-0066">ATP synthesis</keyword>
<keyword id="KW-0067">ATP-binding</keyword>
<keyword id="KW-0375">Hydrogen ion transport</keyword>
<keyword id="KW-0406">Ion transport</keyword>
<keyword id="KW-0547">Nucleotide-binding</keyword>
<keyword id="KW-1185">Reference proteome</keyword>
<keyword id="KW-1278">Translocase</keyword>
<keyword id="KW-0813">Transport</keyword>
<evidence type="ECO:0000255" key="1">
    <source>
        <dbReference type="HAMAP-Rule" id="MF_00309"/>
    </source>
</evidence>
<evidence type="ECO:0000305" key="2"/>
<name>VATA_STRSV</name>
<gene>
    <name evidence="1" type="primary">atpA</name>
    <name type="ordered locus">SSA_0091</name>
</gene>
<comment type="function">
    <text evidence="1">Produces ATP from ADP in the presence of a proton gradient across the membrane. The V-type alpha chain is a catalytic subunit.</text>
</comment>
<comment type="catalytic activity">
    <reaction evidence="1">
        <text>ATP + H2O + 4 H(+)(in) = ADP + phosphate + 5 H(+)(out)</text>
        <dbReference type="Rhea" id="RHEA:57720"/>
        <dbReference type="ChEBI" id="CHEBI:15377"/>
        <dbReference type="ChEBI" id="CHEBI:15378"/>
        <dbReference type="ChEBI" id="CHEBI:30616"/>
        <dbReference type="ChEBI" id="CHEBI:43474"/>
        <dbReference type="ChEBI" id="CHEBI:456216"/>
        <dbReference type="EC" id="7.1.2.2"/>
    </reaction>
</comment>
<comment type="similarity">
    <text evidence="1">Belongs to the ATPase alpha/beta chains family.</text>
</comment>
<comment type="sequence caution" evidence="2">
    <conflict type="erroneous initiation">
        <sequence resource="EMBL-CDS" id="ABN43553"/>
    </conflict>
</comment>